<keyword id="KW-0963">Cytoplasm</keyword>
<keyword id="KW-0444">Lipid biosynthesis</keyword>
<keyword id="KW-0443">Lipid metabolism</keyword>
<keyword id="KW-0594">Phospholipid biosynthesis</keyword>
<keyword id="KW-1208">Phospholipid metabolism</keyword>
<keyword id="KW-1185">Reference proteome</keyword>
<keyword id="KW-0808">Transferase</keyword>
<gene>
    <name evidence="1" type="primary">plsX</name>
    <name type="ordered locus">MG368</name>
</gene>
<protein>
    <recommendedName>
        <fullName evidence="1">Phosphate acyltransferase</fullName>
        <ecNumber evidence="1">2.3.1.274</ecNumber>
    </recommendedName>
    <alternativeName>
        <fullName evidence="1">Acyl-ACP phosphotransacylase</fullName>
    </alternativeName>
    <alternativeName>
        <fullName evidence="1">Acyl-[acyl-carrier-protein]--phosphate acyltransferase</fullName>
    </alternativeName>
    <alternativeName>
        <fullName evidence="1">Phosphate-acyl-ACP acyltransferase</fullName>
    </alternativeName>
</protein>
<dbReference type="EC" id="2.3.1.274" evidence="1"/>
<dbReference type="EMBL" id="L43967">
    <property type="protein sequence ID" value="AAC71595.1"/>
    <property type="molecule type" value="Genomic_DNA"/>
</dbReference>
<dbReference type="EMBL" id="U01791">
    <property type="protein sequence ID" value="AAD10614.1"/>
    <property type="status" value="ALT_INIT"/>
    <property type="molecule type" value="Genomic_DNA"/>
</dbReference>
<dbReference type="PIR" id="G64240">
    <property type="entry name" value="G64240"/>
</dbReference>
<dbReference type="RefSeq" id="WP_009885824.1">
    <property type="nucleotide sequence ID" value="NC_000908.2"/>
</dbReference>
<dbReference type="SMR" id="Q49427"/>
<dbReference type="FunCoup" id="Q49427">
    <property type="interactions" value="94"/>
</dbReference>
<dbReference type="STRING" id="243273.MG_368"/>
<dbReference type="GeneID" id="88282551"/>
<dbReference type="KEGG" id="mge:MG_368"/>
<dbReference type="eggNOG" id="COG0416">
    <property type="taxonomic scope" value="Bacteria"/>
</dbReference>
<dbReference type="HOGENOM" id="CLU_039379_1_1_14"/>
<dbReference type="InParanoid" id="Q49427"/>
<dbReference type="OrthoDB" id="9806408at2"/>
<dbReference type="BioCyc" id="MGEN243273:G1GJ2-462-MONOMER"/>
<dbReference type="UniPathway" id="UPA00085"/>
<dbReference type="Proteomes" id="UP000000807">
    <property type="component" value="Chromosome"/>
</dbReference>
<dbReference type="GO" id="GO:0005737">
    <property type="term" value="C:cytoplasm"/>
    <property type="evidence" value="ECO:0007669"/>
    <property type="project" value="UniProtKB-SubCell"/>
</dbReference>
<dbReference type="GO" id="GO:0043811">
    <property type="term" value="F:phosphate:acyl-[acyl carrier protein] acyltransferase activity"/>
    <property type="evidence" value="ECO:0007669"/>
    <property type="project" value="UniProtKB-UniRule"/>
</dbReference>
<dbReference type="GO" id="GO:0006633">
    <property type="term" value="P:fatty acid biosynthetic process"/>
    <property type="evidence" value="ECO:0007669"/>
    <property type="project" value="UniProtKB-UniRule"/>
</dbReference>
<dbReference type="GO" id="GO:0008654">
    <property type="term" value="P:phospholipid biosynthetic process"/>
    <property type="evidence" value="ECO:0007669"/>
    <property type="project" value="UniProtKB-KW"/>
</dbReference>
<dbReference type="Gene3D" id="3.40.718.10">
    <property type="entry name" value="Isopropylmalate Dehydrogenase"/>
    <property type="match status" value="1"/>
</dbReference>
<dbReference type="HAMAP" id="MF_00019">
    <property type="entry name" value="PlsX"/>
    <property type="match status" value="1"/>
</dbReference>
<dbReference type="InterPro" id="IPR003664">
    <property type="entry name" value="FA_synthesis"/>
</dbReference>
<dbReference type="InterPro" id="IPR012281">
    <property type="entry name" value="Phospholipid_synth_PlsX-like"/>
</dbReference>
<dbReference type="NCBIfam" id="TIGR00182">
    <property type="entry name" value="plsX"/>
    <property type="match status" value="1"/>
</dbReference>
<dbReference type="PANTHER" id="PTHR30100">
    <property type="entry name" value="FATTY ACID/PHOSPHOLIPID SYNTHESIS PROTEIN PLSX"/>
    <property type="match status" value="1"/>
</dbReference>
<dbReference type="PANTHER" id="PTHR30100:SF1">
    <property type="entry name" value="PHOSPHATE ACYLTRANSFERASE"/>
    <property type="match status" value="1"/>
</dbReference>
<dbReference type="Pfam" id="PF02504">
    <property type="entry name" value="FA_synthesis"/>
    <property type="match status" value="1"/>
</dbReference>
<dbReference type="PIRSF" id="PIRSF002465">
    <property type="entry name" value="Phsphlp_syn_PlsX"/>
    <property type="match status" value="1"/>
</dbReference>
<dbReference type="SUPFAM" id="SSF53659">
    <property type="entry name" value="Isocitrate/Isopropylmalate dehydrogenase-like"/>
    <property type="match status" value="1"/>
</dbReference>
<comment type="function">
    <text evidence="1">Catalyzes the reversible formation of acyl-phosphate (acyl-PO(4)) from acyl-[acyl-carrier-protein] (acyl-ACP). This enzyme utilizes acyl-ACP as fatty acyl donor, but not acyl-CoA.</text>
</comment>
<comment type="catalytic activity">
    <reaction evidence="1">
        <text>a fatty acyl-[ACP] + phosphate = an acyl phosphate + holo-[ACP]</text>
        <dbReference type="Rhea" id="RHEA:42292"/>
        <dbReference type="Rhea" id="RHEA-COMP:9685"/>
        <dbReference type="Rhea" id="RHEA-COMP:14125"/>
        <dbReference type="ChEBI" id="CHEBI:43474"/>
        <dbReference type="ChEBI" id="CHEBI:59918"/>
        <dbReference type="ChEBI" id="CHEBI:64479"/>
        <dbReference type="ChEBI" id="CHEBI:138651"/>
        <dbReference type="EC" id="2.3.1.274"/>
    </reaction>
</comment>
<comment type="pathway">
    <text evidence="1">Lipid metabolism; phospholipid metabolism.</text>
</comment>
<comment type="subunit">
    <text evidence="1">Homodimer. Probably interacts with PlsY.</text>
</comment>
<comment type="subcellular location">
    <subcellularLocation>
        <location evidence="1">Cytoplasm</location>
    </subcellularLocation>
    <text evidence="1">Associated with the membrane possibly through PlsY.</text>
</comment>
<comment type="similarity">
    <text evidence="1">Belongs to the PlsX family.</text>
</comment>
<comment type="sequence caution" evidence="2">
    <conflict type="erroneous initiation">
        <sequence resource="EMBL-CDS" id="AAD10614"/>
    </conflict>
</comment>
<organism>
    <name type="scientific">Mycoplasma genitalium (strain ATCC 33530 / DSM 19775 / NCTC 10195 / G37)</name>
    <name type="common">Mycoplasmoides genitalium</name>
    <dbReference type="NCBI Taxonomy" id="243273"/>
    <lineage>
        <taxon>Bacteria</taxon>
        <taxon>Bacillati</taxon>
        <taxon>Mycoplasmatota</taxon>
        <taxon>Mycoplasmoidales</taxon>
        <taxon>Mycoplasmoidaceae</taxon>
        <taxon>Mycoplasmoides</taxon>
    </lineage>
</organism>
<accession>Q49427</accession>
<accession>Q49240</accession>
<feature type="chain" id="PRO_0000189905" description="Phosphate acyltransferase">
    <location>
        <begin position="1"/>
        <end position="328"/>
    </location>
</feature>
<proteinExistence type="inferred from homology"/>
<reference key="1">
    <citation type="journal article" date="1995" name="Science">
        <title>The minimal gene complement of Mycoplasma genitalium.</title>
        <authorList>
            <person name="Fraser C.M."/>
            <person name="Gocayne J.D."/>
            <person name="White O."/>
            <person name="Adams M.D."/>
            <person name="Clayton R.A."/>
            <person name="Fleischmann R.D."/>
            <person name="Bult C.J."/>
            <person name="Kerlavage A.R."/>
            <person name="Sutton G.G."/>
            <person name="Kelley J.M."/>
            <person name="Fritchman J.L."/>
            <person name="Weidman J.F."/>
            <person name="Small K.V."/>
            <person name="Sandusky M."/>
            <person name="Fuhrmann J.L."/>
            <person name="Nguyen D.T."/>
            <person name="Utterback T.R."/>
            <person name="Saudek D.M."/>
            <person name="Phillips C.A."/>
            <person name="Merrick J.M."/>
            <person name="Tomb J.-F."/>
            <person name="Dougherty B.A."/>
            <person name="Bott K.F."/>
            <person name="Hu P.-C."/>
            <person name="Lucier T.S."/>
            <person name="Peterson S.N."/>
            <person name="Smith H.O."/>
            <person name="Hutchison C.A. III"/>
            <person name="Venter J.C."/>
        </authorList>
    </citation>
    <scope>NUCLEOTIDE SEQUENCE [LARGE SCALE GENOMIC DNA]</scope>
    <source>
        <strain>ATCC 33530 / DSM 19775 / NCTC 10195 / G37</strain>
    </source>
</reference>
<reference key="2">
    <citation type="journal article" date="1993" name="J. Bacteriol.">
        <title>A survey of the Mycoplasma genitalium genome by using random sequencing.</title>
        <authorList>
            <person name="Peterson S.N."/>
            <person name="Hu P.-C."/>
            <person name="Bott K.F."/>
            <person name="Hutchison C.A. III"/>
        </authorList>
    </citation>
    <scope>NUCLEOTIDE SEQUENCE [GENOMIC DNA] OF 1-76</scope>
    <source>
        <strain>ATCC 33530 / DSM 19775 / NCTC 10195 / G37</strain>
    </source>
</reference>
<evidence type="ECO:0000255" key="1">
    <source>
        <dbReference type="HAMAP-Rule" id="MF_00019"/>
    </source>
</evidence>
<evidence type="ECO:0000305" key="2"/>
<sequence length="328" mass="36502">MAFRFAVDCLGFENKPSEAIEAVLKYWSFHQDLNFILIGDEKAFDGLDILPKNITKKLANSFIEMTDTPLSARRKVNSSMQIAINLVREGNADVVISAGSSAVYASLTNDAFGKINKNTKSAFMSYVPTDNNNWFYFLDVGANKYFTGKELYFLGLMADIFVKKTTTKKTPKIGLLNIGTEENKGFDYHQEAFKLLKADKNLNFLGFVESRFLLDGICDILIADGYSGNLVLKAMEGTFKTIARILKRGYKRNPLAGLFSLGIIKSVAKKFDYKNNAGAVVMGLNKLALKTHGSADKQQFLSTIRLAHLSLKSDLINAIKTSLNNYEE</sequence>
<name>PLSX_MYCGE</name>